<reference key="1">
    <citation type="submission" date="2006-03" db="EMBL/GenBank/DDBJ databases">
        <title>Complete genome sequence of Francisella tularensis LVS (Live Vaccine Strain).</title>
        <authorList>
            <person name="Chain P."/>
            <person name="Larimer F."/>
            <person name="Land M."/>
            <person name="Stilwagen S."/>
            <person name="Larsson P."/>
            <person name="Bearden S."/>
            <person name="Chu M."/>
            <person name="Oyston P."/>
            <person name="Forsman M."/>
            <person name="Andersson S."/>
            <person name="Lindler L."/>
            <person name="Titball R."/>
            <person name="Garcia E."/>
        </authorList>
    </citation>
    <scope>NUCLEOTIDE SEQUENCE [LARGE SCALE GENOMIC DNA]</scope>
    <source>
        <strain>LVS</strain>
    </source>
</reference>
<dbReference type="EMBL" id="AM233362">
    <property type="protein sequence ID" value="CAJ78734.1"/>
    <property type="molecule type" value="Genomic_DNA"/>
</dbReference>
<dbReference type="SMR" id="Q2A5B6"/>
<dbReference type="KEGG" id="ftl:FTL_0293"/>
<dbReference type="Proteomes" id="UP000001944">
    <property type="component" value="Chromosome"/>
</dbReference>
<dbReference type="GO" id="GO:0005737">
    <property type="term" value="C:cytoplasm"/>
    <property type="evidence" value="ECO:0007669"/>
    <property type="project" value="UniProtKB-SubCell"/>
</dbReference>
<dbReference type="GO" id="GO:0051082">
    <property type="term" value="F:unfolded protein binding"/>
    <property type="evidence" value="ECO:0007669"/>
    <property type="project" value="InterPro"/>
</dbReference>
<dbReference type="GO" id="GO:0006457">
    <property type="term" value="P:protein folding"/>
    <property type="evidence" value="ECO:0007669"/>
    <property type="project" value="UniProtKB-UniRule"/>
</dbReference>
<dbReference type="GO" id="GO:0051262">
    <property type="term" value="P:protein tetramerization"/>
    <property type="evidence" value="ECO:0007669"/>
    <property type="project" value="InterPro"/>
</dbReference>
<dbReference type="GO" id="GO:0015031">
    <property type="term" value="P:protein transport"/>
    <property type="evidence" value="ECO:0007669"/>
    <property type="project" value="UniProtKB-UniRule"/>
</dbReference>
<dbReference type="Gene3D" id="3.10.420.10">
    <property type="entry name" value="SecB-like"/>
    <property type="match status" value="1"/>
</dbReference>
<dbReference type="HAMAP" id="MF_00821">
    <property type="entry name" value="SecB"/>
    <property type="match status" value="1"/>
</dbReference>
<dbReference type="InterPro" id="IPR003708">
    <property type="entry name" value="SecB"/>
</dbReference>
<dbReference type="InterPro" id="IPR035958">
    <property type="entry name" value="SecB-like_sf"/>
</dbReference>
<dbReference type="NCBIfam" id="NF004391">
    <property type="entry name" value="PRK05751.1-2"/>
    <property type="match status" value="1"/>
</dbReference>
<dbReference type="NCBIfam" id="TIGR00809">
    <property type="entry name" value="secB"/>
    <property type="match status" value="1"/>
</dbReference>
<dbReference type="PANTHER" id="PTHR36918">
    <property type="match status" value="1"/>
</dbReference>
<dbReference type="PANTHER" id="PTHR36918:SF1">
    <property type="entry name" value="PROTEIN-EXPORT PROTEIN SECB"/>
    <property type="match status" value="1"/>
</dbReference>
<dbReference type="Pfam" id="PF02556">
    <property type="entry name" value="SecB"/>
    <property type="match status" value="1"/>
</dbReference>
<dbReference type="PRINTS" id="PR01594">
    <property type="entry name" value="SECBCHAPRONE"/>
</dbReference>
<dbReference type="SUPFAM" id="SSF54611">
    <property type="entry name" value="SecB-like"/>
    <property type="match status" value="1"/>
</dbReference>
<gene>
    <name evidence="1" type="primary">secB2</name>
    <name type="ordered locus">FTL_0293</name>
</gene>
<sequence>MQNNEIQPSFLIQKVYTKDVSFETINSPACFKEQWNPSSDFNIDINTTKINDENFELDLTITVTTKNNETNAYIAEVTQSGIFTITSMSEEQIDSVLNTYCANTLFPYAKRIIDSSIIKGGFLPLNLAPINFDAIYLQKKSSPKREH</sequence>
<evidence type="ECO:0000255" key="1">
    <source>
        <dbReference type="HAMAP-Rule" id="MF_00821"/>
    </source>
</evidence>
<protein>
    <recommendedName>
        <fullName evidence="1">Protein-export protein SecB 2</fullName>
    </recommendedName>
</protein>
<accession>Q2A5B6</accession>
<name>SECB2_FRATH</name>
<keyword id="KW-0143">Chaperone</keyword>
<keyword id="KW-0963">Cytoplasm</keyword>
<keyword id="KW-0653">Protein transport</keyword>
<keyword id="KW-1185">Reference proteome</keyword>
<keyword id="KW-0811">Translocation</keyword>
<keyword id="KW-0813">Transport</keyword>
<organism>
    <name type="scientific">Francisella tularensis subsp. holarctica (strain LVS)</name>
    <dbReference type="NCBI Taxonomy" id="376619"/>
    <lineage>
        <taxon>Bacteria</taxon>
        <taxon>Pseudomonadati</taxon>
        <taxon>Pseudomonadota</taxon>
        <taxon>Gammaproteobacteria</taxon>
        <taxon>Thiotrichales</taxon>
        <taxon>Francisellaceae</taxon>
        <taxon>Francisella</taxon>
    </lineage>
</organism>
<proteinExistence type="inferred from homology"/>
<feature type="chain" id="PRO_0000318228" description="Protein-export protein SecB 2">
    <location>
        <begin position="1"/>
        <end position="147"/>
    </location>
</feature>
<comment type="function">
    <text evidence="1">One of the proteins required for the normal export of preproteins out of the cell cytoplasm. It is a molecular chaperone that binds to a subset of precursor proteins, maintaining them in a translocation-competent state. It also specifically binds to its receptor SecA.</text>
</comment>
<comment type="subunit">
    <text evidence="1">Homotetramer, a dimer of dimers. One homotetramer interacts with 1 SecA dimer.</text>
</comment>
<comment type="subcellular location">
    <subcellularLocation>
        <location evidence="1">Cytoplasm</location>
    </subcellularLocation>
</comment>
<comment type="similarity">
    <text evidence="1">Belongs to the SecB family.</text>
</comment>